<proteinExistence type="inferred from homology"/>
<accession>Q4K8M4</accession>
<protein>
    <recommendedName>
        <fullName evidence="1">Ubiquinone biosynthesis O-methyltransferase</fullName>
    </recommendedName>
    <alternativeName>
        <fullName evidence="1">2-polyprenyl-6-hydroxyphenol methylase</fullName>
        <ecNumber evidence="1">2.1.1.222</ecNumber>
    </alternativeName>
    <alternativeName>
        <fullName evidence="1">3-demethylubiquinone 3-O-methyltransferase</fullName>
        <ecNumber evidence="1">2.1.1.64</ecNumber>
    </alternativeName>
</protein>
<organism>
    <name type="scientific">Pseudomonas fluorescens (strain ATCC BAA-477 / NRRL B-23932 / Pf-5)</name>
    <dbReference type="NCBI Taxonomy" id="220664"/>
    <lineage>
        <taxon>Bacteria</taxon>
        <taxon>Pseudomonadati</taxon>
        <taxon>Pseudomonadota</taxon>
        <taxon>Gammaproteobacteria</taxon>
        <taxon>Pseudomonadales</taxon>
        <taxon>Pseudomonadaceae</taxon>
        <taxon>Pseudomonas</taxon>
    </lineage>
</organism>
<dbReference type="EC" id="2.1.1.222" evidence="1"/>
<dbReference type="EC" id="2.1.1.64" evidence="1"/>
<dbReference type="EMBL" id="CP000076">
    <property type="protein sequence ID" value="AAY93572.1"/>
    <property type="molecule type" value="Genomic_DNA"/>
</dbReference>
<dbReference type="RefSeq" id="WP_011062588.1">
    <property type="nucleotide sequence ID" value="NC_004129.6"/>
</dbReference>
<dbReference type="SMR" id="Q4K8M4"/>
<dbReference type="STRING" id="220664.PFL_4317"/>
<dbReference type="GeneID" id="57477394"/>
<dbReference type="KEGG" id="pfl:PFL_4317"/>
<dbReference type="PATRIC" id="fig|220664.5.peg.4422"/>
<dbReference type="eggNOG" id="COG2227">
    <property type="taxonomic scope" value="Bacteria"/>
</dbReference>
<dbReference type="HOGENOM" id="CLU_042432_5_0_6"/>
<dbReference type="UniPathway" id="UPA00232"/>
<dbReference type="Proteomes" id="UP000008540">
    <property type="component" value="Chromosome"/>
</dbReference>
<dbReference type="GO" id="GO:0102208">
    <property type="term" value="F:2-polyprenyl-6-hydroxyphenol methylase activity"/>
    <property type="evidence" value="ECO:0007669"/>
    <property type="project" value="UniProtKB-EC"/>
</dbReference>
<dbReference type="GO" id="GO:0061542">
    <property type="term" value="F:3-demethylubiquinol 3-O-methyltransferase activity"/>
    <property type="evidence" value="ECO:0007669"/>
    <property type="project" value="UniProtKB-UniRule"/>
</dbReference>
<dbReference type="GO" id="GO:0010420">
    <property type="term" value="F:polyprenyldihydroxybenzoate methyltransferase activity"/>
    <property type="evidence" value="ECO:0007669"/>
    <property type="project" value="InterPro"/>
</dbReference>
<dbReference type="GO" id="GO:0032259">
    <property type="term" value="P:methylation"/>
    <property type="evidence" value="ECO:0007669"/>
    <property type="project" value="UniProtKB-KW"/>
</dbReference>
<dbReference type="CDD" id="cd02440">
    <property type="entry name" value="AdoMet_MTases"/>
    <property type="match status" value="1"/>
</dbReference>
<dbReference type="FunFam" id="3.40.50.150:FF:000028">
    <property type="entry name" value="Ubiquinone biosynthesis O-methyltransferase"/>
    <property type="match status" value="1"/>
</dbReference>
<dbReference type="Gene3D" id="3.40.50.150">
    <property type="entry name" value="Vaccinia Virus protein VP39"/>
    <property type="match status" value="1"/>
</dbReference>
<dbReference type="HAMAP" id="MF_00472">
    <property type="entry name" value="UbiG"/>
    <property type="match status" value="1"/>
</dbReference>
<dbReference type="InterPro" id="IPR029063">
    <property type="entry name" value="SAM-dependent_MTases_sf"/>
</dbReference>
<dbReference type="InterPro" id="IPR010233">
    <property type="entry name" value="UbiG_MeTrfase"/>
</dbReference>
<dbReference type="NCBIfam" id="TIGR01983">
    <property type="entry name" value="UbiG"/>
    <property type="match status" value="1"/>
</dbReference>
<dbReference type="PANTHER" id="PTHR43464">
    <property type="entry name" value="METHYLTRANSFERASE"/>
    <property type="match status" value="1"/>
</dbReference>
<dbReference type="PANTHER" id="PTHR43464:SF19">
    <property type="entry name" value="UBIQUINONE BIOSYNTHESIS O-METHYLTRANSFERASE, MITOCHONDRIAL"/>
    <property type="match status" value="1"/>
</dbReference>
<dbReference type="Pfam" id="PF13489">
    <property type="entry name" value="Methyltransf_23"/>
    <property type="match status" value="1"/>
</dbReference>
<dbReference type="SUPFAM" id="SSF53335">
    <property type="entry name" value="S-adenosyl-L-methionine-dependent methyltransferases"/>
    <property type="match status" value="1"/>
</dbReference>
<gene>
    <name evidence="1" type="primary">ubiG</name>
    <name type="ordered locus">PFL_4317</name>
</gene>
<sequence length="232" mass="25966">MSNVDHAEIAKFEALAHRWWDRESEFKPLHDINPLRVNWIDERVGLAGKKVLDVGCGGGILSEAMAQRGATVTGIDMGEAPLAVAQLHQLESGVNVEYRQITAEALAEEMPEQFDVVTCLEMLEHVPDPSSVIRACFRMVKPGGQVFFSTINRNPKAYLFAIIGAEYIMKLLPRGTHDFKKFIRPSELGAWSRSAGLTVKDIIGLTYNPLTKHYKLAPDVDVNYMIQTLREE</sequence>
<name>UBIG_PSEF5</name>
<keyword id="KW-0489">Methyltransferase</keyword>
<keyword id="KW-0949">S-adenosyl-L-methionine</keyword>
<keyword id="KW-0808">Transferase</keyword>
<keyword id="KW-0831">Ubiquinone biosynthesis</keyword>
<comment type="function">
    <text evidence="1">O-methyltransferase that catalyzes the 2 O-methylation steps in the ubiquinone biosynthetic pathway.</text>
</comment>
<comment type="catalytic activity">
    <reaction evidence="1">
        <text>a 3-demethylubiquinol + S-adenosyl-L-methionine = a ubiquinol + S-adenosyl-L-homocysteine + H(+)</text>
        <dbReference type="Rhea" id="RHEA:44380"/>
        <dbReference type="Rhea" id="RHEA-COMP:9566"/>
        <dbReference type="Rhea" id="RHEA-COMP:10914"/>
        <dbReference type="ChEBI" id="CHEBI:15378"/>
        <dbReference type="ChEBI" id="CHEBI:17976"/>
        <dbReference type="ChEBI" id="CHEBI:57856"/>
        <dbReference type="ChEBI" id="CHEBI:59789"/>
        <dbReference type="ChEBI" id="CHEBI:84422"/>
        <dbReference type="EC" id="2.1.1.64"/>
    </reaction>
</comment>
<comment type="catalytic activity">
    <reaction evidence="1">
        <text>a 3-(all-trans-polyprenyl)benzene-1,2-diol + S-adenosyl-L-methionine = a 2-methoxy-6-(all-trans-polyprenyl)phenol + S-adenosyl-L-homocysteine + H(+)</text>
        <dbReference type="Rhea" id="RHEA:31411"/>
        <dbReference type="Rhea" id="RHEA-COMP:9550"/>
        <dbReference type="Rhea" id="RHEA-COMP:9551"/>
        <dbReference type="ChEBI" id="CHEBI:15378"/>
        <dbReference type="ChEBI" id="CHEBI:57856"/>
        <dbReference type="ChEBI" id="CHEBI:59789"/>
        <dbReference type="ChEBI" id="CHEBI:62729"/>
        <dbReference type="ChEBI" id="CHEBI:62731"/>
        <dbReference type="EC" id="2.1.1.222"/>
    </reaction>
</comment>
<comment type="pathway">
    <text evidence="1">Cofactor biosynthesis; ubiquinone biosynthesis.</text>
</comment>
<comment type="similarity">
    <text evidence="1">Belongs to the methyltransferase superfamily. UbiG/COQ3 family.</text>
</comment>
<reference key="1">
    <citation type="journal article" date="2005" name="Nat. Biotechnol.">
        <title>Complete genome sequence of the plant commensal Pseudomonas fluorescens Pf-5.</title>
        <authorList>
            <person name="Paulsen I.T."/>
            <person name="Press C.M."/>
            <person name="Ravel J."/>
            <person name="Kobayashi D.Y."/>
            <person name="Myers G.S.A."/>
            <person name="Mavrodi D.V."/>
            <person name="DeBoy R.T."/>
            <person name="Seshadri R."/>
            <person name="Ren Q."/>
            <person name="Madupu R."/>
            <person name="Dodson R.J."/>
            <person name="Durkin A.S."/>
            <person name="Brinkac L.M."/>
            <person name="Daugherty S.C."/>
            <person name="Sullivan S.A."/>
            <person name="Rosovitz M.J."/>
            <person name="Gwinn M.L."/>
            <person name="Zhou L."/>
            <person name="Schneider D.J."/>
            <person name="Cartinhour S.W."/>
            <person name="Nelson W.C."/>
            <person name="Weidman J."/>
            <person name="Watkins K."/>
            <person name="Tran K."/>
            <person name="Khouri H."/>
            <person name="Pierson E.A."/>
            <person name="Pierson L.S. III"/>
            <person name="Thomashow L.S."/>
            <person name="Loper J.E."/>
        </authorList>
    </citation>
    <scope>NUCLEOTIDE SEQUENCE [LARGE SCALE GENOMIC DNA]</scope>
    <source>
        <strain>ATCC BAA-477 / NRRL B-23932 / Pf-5</strain>
    </source>
</reference>
<feature type="chain" id="PRO_0000241718" description="Ubiquinone biosynthesis O-methyltransferase">
    <location>
        <begin position="1"/>
        <end position="232"/>
    </location>
</feature>
<feature type="binding site" evidence="1">
    <location>
        <position position="36"/>
    </location>
    <ligand>
        <name>S-adenosyl-L-methionine</name>
        <dbReference type="ChEBI" id="CHEBI:59789"/>
    </ligand>
</feature>
<feature type="binding site" evidence="1">
    <location>
        <position position="55"/>
    </location>
    <ligand>
        <name>S-adenosyl-L-methionine</name>
        <dbReference type="ChEBI" id="CHEBI:59789"/>
    </ligand>
</feature>
<feature type="binding site" evidence="1">
    <location>
        <position position="76"/>
    </location>
    <ligand>
        <name>S-adenosyl-L-methionine</name>
        <dbReference type="ChEBI" id="CHEBI:59789"/>
    </ligand>
</feature>
<feature type="binding site" evidence="1">
    <location>
        <position position="120"/>
    </location>
    <ligand>
        <name>S-adenosyl-L-methionine</name>
        <dbReference type="ChEBI" id="CHEBI:59789"/>
    </ligand>
</feature>
<evidence type="ECO:0000255" key="1">
    <source>
        <dbReference type="HAMAP-Rule" id="MF_00472"/>
    </source>
</evidence>